<gene>
    <name evidence="1" type="primary">asnS</name>
    <name type="ordered locus">MHP7448_0401</name>
</gene>
<reference key="1">
    <citation type="journal article" date="2005" name="J. Bacteriol.">
        <title>Swine and poultry pathogens: the complete genome sequences of two strains of Mycoplasma hyopneumoniae and a strain of Mycoplasma synoviae.</title>
        <authorList>
            <person name="Vasconcelos A.T.R."/>
            <person name="Ferreira H.B."/>
            <person name="Bizarro C.V."/>
            <person name="Bonatto S.L."/>
            <person name="Carvalho M.O."/>
            <person name="Pinto P.M."/>
            <person name="Almeida D.F."/>
            <person name="Almeida L.G.P."/>
            <person name="Almeida R."/>
            <person name="Alves-Junior L."/>
            <person name="Assuncao E.N."/>
            <person name="Azevedo V.A.C."/>
            <person name="Bogo M.R."/>
            <person name="Brigido M.M."/>
            <person name="Brocchi M."/>
            <person name="Burity H.A."/>
            <person name="Camargo A.A."/>
            <person name="Camargo S.S."/>
            <person name="Carepo M.S."/>
            <person name="Carraro D.M."/>
            <person name="de Mattos Cascardo J.C."/>
            <person name="Castro L.A."/>
            <person name="Cavalcanti G."/>
            <person name="Chemale G."/>
            <person name="Collevatti R.G."/>
            <person name="Cunha C.W."/>
            <person name="Dallagiovanna B."/>
            <person name="Dambros B.P."/>
            <person name="Dellagostin O.A."/>
            <person name="Falcao C."/>
            <person name="Fantinatti-Garboggini F."/>
            <person name="Felipe M.S.S."/>
            <person name="Fiorentin L."/>
            <person name="Franco G.R."/>
            <person name="Freitas N.S.A."/>
            <person name="Frias D."/>
            <person name="Grangeiro T.B."/>
            <person name="Grisard E.C."/>
            <person name="Guimaraes C.T."/>
            <person name="Hungria M."/>
            <person name="Jardim S.N."/>
            <person name="Krieger M.A."/>
            <person name="Laurino J.P."/>
            <person name="Lima L.F.A."/>
            <person name="Lopes M.I."/>
            <person name="Loreto E.L.S."/>
            <person name="Madeira H.M.F."/>
            <person name="Manfio G.P."/>
            <person name="Maranhao A.Q."/>
            <person name="Martinkovics C.T."/>
            <person name="Medeiros S.R.B."/>
            <person name="Moreira M.A.M."/>
            <person name="Neiva M."/>
            <person name="Ramalho-Neto C.E."/>
            <person name="Nicolas M.F."/>
            <person name="Oliveira S.C."/>
            <person name="Paixao R.F.C."/>
            <person name="Pedrosa F.O."/>
            <person name="Pena S.D.J."/>
            <person name="Pereira M."/>
            <person name="Pereira-Ferrari L."/>
            <person name="Piffer I."/>
            <person name="Pinto L.S."/>
            <person name="Potrich D.P."/>
            <person name="Salim A.C.M."/>
            <person name="Santos F.R."/>
            <person name="Schmitt R."/>
            <person name="Schneider M.P.C."/>
            <person name="Schrank A."/>
            <person name="Schrank I.S."/>
            <person name="Schuck A.F."/>
            <person name="Seuanez H.N."/>
            <person name="Silva D.W."/>
            <person name="Silva R."/>
            <person name="Silva S.C."/>
            <person name="Soares C.M.A."/>
            <person name="Souza K.R.L."/>
            <person name="Souza R.C."/>
            <person name="Staats C.C."/>
            <person name="Steffens M.B.R."/>
            <person name="Teixeira S.M.R."/>
            <person name="Urmenyi T.P."/>
            <person name="Vainstein M.H."/>
            <person name="Zuccherato L.W."/>
            <person name="Simpson A.J.G."/>
            <person name="Zaha A."/>
        </authorList>
    </citation>
    <scope>NUCLEOTIDE SEQUENCE [LARGE SCALE GENOMIC DNA]</scope>
    <source>
        <strain>7448</strain>
    </source>
</reference>
<name>SYN_MESH7</name>
<sequence length="449" mass="52327">MFQTINEISIHPELYNQKKVLIQGWITNIRGNLKIIFVELNDGSSFKNLQCVLKKEFIDFDKIENLALGVAVEISGIFSNTPERQQFGEVLVETLEIKGNNYNTNFPIQNQEISLEVLRQMPHFRHRSRLFRAIMKLRSALFFEIHKFFRRQGFINFSAPILTSNDGEGAGEVFIVDDENKDFFNKKTTLGVTGQLHAEAYALGFKKVYTFAPTFRAERSNTRRHAAEFWMIEPEVAFFTLEQIIELAVKLLQKVIKSVIIRNKDEFIFLEKAGDKNLRKRLLQFCDSQVTQISYEKAIELLLEHQEKFEEKDLFFGCDLKTEHERFLTEEIFHMPVVIINYPKNLKAFYMHQNEDGQTVAAFDLLVPGIGELIGGSQREVRYEKLLARMNELNMNIEEFQWYLDLRKYGNPGSSGFGLGFERLLMYITGIENIRDVIPFPRTNKNILM</sequence>
<keyword id="KW-0030">Aminoacyl-tRNA synthetase</keyword>
<keyword id="KW-0067">ATP-binding</keyword>
<keyword id="KW-0963">Cytoplasm</keyword>
<keyword id="KW-0436">Ligase</keyword>
<keyword id="KW-0547">Nucleotide-binding</keyword>
<keyword id="KW-0648">Protein biosynthesis</keyword>
<dbReference type="EC" id="6.1.1.22" evidence="1"/>
<dbReference type="EMBL" id="AE017244">
    <property type="protein sequence ID" value="AAZ53770.1"/>
    <property type="molecule type" value="Genomic_DNA"/>
</dbReference>
<dbReference type="RefSeq" id="WP_011290222.1">
    <property type="nucleotide sequence ID" value="NC_007332.1"/>
</dbReference>
<dbReference type="SMR" id="Q4A7W9"/>
<dbReference type="KEGG" id="mhp:MHP7448_0401"/>
<dbReference type="HOGENOM" id="CLU_004553_2_0_14"/>
<dbReference type="Proteomes" id="UP000000553">
    <property type="component" value="Chromosome"/>
</dbReference>
<dbReference type="GO" id="GO:0005737">
    <property type="term" value="C:cytoplasm"/>
    <property type="evidence" value="ECO:0007669"/>
    <property type="project" value="UniProtKB-SubCell"/>
</dbReference>
<dbReference type="GO" id="GO:0004816">
    <property type="term" value="F:asparagine-tRNA ligase activity"/>
    <property type="evidence" value="ECO:0007669"/>
    <property type="project" value="UniProtKB-UniRule"/>
</dbReference>
<dbReference type="GO" id="GO:0005524">
    <property type="term" value="F:ATP binding"/>
    <property type="evidence" value="ECO:0007669"/>
    <property type="project" value="UniProtKB-UniRule"/>
</dbReference>
<dbReference type="GO" id="GO:0003676">
    <property type="term" value="F:nucleic acid binding"/>
    <property type="evidence" value="ECO:0007669"/>
    <property type="project" value="InterPro"/>
</dbReference>
<dbReference type="GO" id="GO:0006421">
    <property type="term" value="P:asparaginyl-tRNA aminoacylation"/>
    <property type="evidence" value="ECO:0007669"/>
    <property type="project" value="UniProtKB-UniRule"/>
</dbReference>
<dbReference type="CDD" id="cd04318">
    <property type="entry name" value="EcAsnRS_like_N"/>
    <property type="match status" value="1"/>
</dbReference>
<dbReference type="FunFam" id="3.30.930.10:FF:000016">
    <property type="entry name" value="Asparagine--tRNA ligase"/>
    <property type="match status" value="1"/>
</dbReference>
<dbReference type="Gene3D" id="3.30.930.10">
    <property type="entry name" value="Bira Bifunctional Protein, Domain 2"/>
    <property type="match status" value="1"/>
</dbReference>
<dbReference type="Gene3D" id="2.40.50.140">
    <property type="entry name" value="Nucleic acid-binding proteins"/>
    <property type="match status" value="1"/>
</dbReference>
<dbReference type="HAMAP" id="MF_00534">
    <property type="entry name" value="Asn_tRNA_synth"/>
    <property type="match status" value="1"/>
</dbReference>
<dbReference type="InterPro" id="IPR004364">
    <property type="entry name" value="Aa-tRNA-synt_II"/>
</dbReference>
<dbReference type="InterPro" id="IPR006195">
    <property type="entry name" value="aa-tRNA-synth_II"/>
</dbReference>
<dbReference type="InterPro" id="IPR045864">
    <property type="entry name" value="aa-tRNA-synth_II/BPL/LPL"/>
</dbReference>
<dbReference type="InterPro" id="IPR004522">
    <property type="entry name" value="Asn-tRNA-ligase"/>
</dbReference>
<dbReference type="InterPro" id="IPR002312">
    <property type="entry name" value="Asp/Asn-tRNA-synth_IIb"/>
</dbReference>
<dbReference type="InterPro" id="IPR012340">
    <property type="entry name" value="NA-bd_OB-fold"/>
</dbReference>
<dbReference type="InterPro" id="IPR004365">
    <property type="entry name" value="NA-bd_OB_tRNA"/>
</dbReference>
<dbReference type="NCBIfam" id="TIGR00457">
    <property type="entry name" value="asnS"/>
    <property type="match status" value="1"/>
</dbReference>
<dbReference type="NCBIfam" id="NF003037">
    <property type="entry name" value="PRK03932.1"/>
    <property type="match status" value="1"/>
</dbReference>
<dbReference type="PANTHER" id="PTHR22594:SF34">
    <property type="entry name" value="ASPARAGINE--TRNA LIGASE, MITOCHONDRIAL-RELATED"/>
    <property type="match status" value="1"/>
</dbReference>
<dbReference type="PANTHER" id="PTHR22594">
    <property type="entry name" value="ASPARTYL/LYSYL-TRNA SYNTHETASE"/>
    <property type="match status" value="1"/>
</dbReference>
<dbReference type="Pfam" id="PF00152">
    <property type="entry name" value="tRNA-synt_2"/>
    <property type="match status" value="1"/>
</dbReference>
<dbReference type="Pfam" id="PF01336">
    <property type="entry name" value="tRNA_anti-codon"/>
    <property type="match status" value="1"/>
</dbReference>
<dbReference type="PRINTS" id="PR01042">
    <property type="entry name" value="TRNASYNTHASP"/>
</dbReference>
<dbReference type="SUPFAM" id="SSF55681">
    <property type="entry name" value="Class II aaRS and biotin synthetases"/>
    <property type="match status" value="1"/>
</dbReference>
<dbReference type="SUPFAM" id="SSF50249">
    <property type="entry name" value="Nucleic acid-binding proteins"/>
    <property type="match status" value="1"/>
</dbReference>
<dbReference type="PROSITE" id="PS50862">
    <property type="entry name" value="AA_TRNA_LIGASE_II"/>
    <property type="match status" value="1"/>
</dbReference>
<protein>
    <recommendedName>
        <fullName evidence="1">Asparagine--tRNA ligase</fullName>
        <ecNumber evidence="1">6.1.1.22</ecNumber>
    </recommendedName>
    <alternativeName>
        <fullName evidence="1">Asparaginyl-tRNA synthetase</fullName>
        <shortName evidence="1">AsnRS</shortName>
    </alternativeName>
</protein>
<comment type="catalytic activity">
    <reaction evidence="1">
        <text>tRNA(Asn) + L-asparagine + ATP = L-asparaginyl-tRNA(Asn) + AMP + diphosphate + H(+)</text>
        <dbReference type="Rhea" id="RHEA:11180"/>
        <dbReference type="Rhea" id="RHEA-COMP:9659"/>
        <dbReference type="Rhea" id="RHEA-COMP:9674"/>
        <dbReference type="ChEBI" id="CHEBI:15378"/>
        <dbReference type="ChEBI" id="CHEBI:30616"/>
        <dbReference type="ChEBI" id="CHEBI:33019"/>
        <dbReference type="ChEBI" id="CHEBI:58048"/>
        <dbReference type="ChEBI" id="CHEBI:78442"/>
        <dbReference type="ChEBI" id="CHEBI:78515"/>
        <dbReference type="ChEBI" id="CHEBI:456215"/>
        <dbReference type="EC" id="6.1.1.22"/>
    </reaction>
</comment>
<comment type="subunit">
    <text evidence="1">Homodimer.</text>
</comment>
<comment type="subcellular location">
    <subcellularLocation>
        <location evidence="1">Cytoplasm</location>
    </subcellularLocation>
</comment>
<comment type="similarity">
    <text evidence="1">Belongs to the class-II aminoacyl-tRNA synthetase family.</text>
</comment>
<accession>Q4A7W9</accession>
<organism>
    <name type="scientific">Mesomycoplasma hyopneumoniae (strain 7448)</name>
    <name type="common">Mycoplasma hyopneumoniae</name>
    <dbReference type="NCBI Taxonomy" id="262722"/>
    <lineage>
        <taxon>Bacteria</taxon>
        <taxon>Bacillati</taxon>
        <taxon>Mycoplasmatota</taxon>
        <taxon>Mycoplasmoidales</taxon>
        <taxon>Metamycoplasmataceae</taxon>
        <taxon>Mesomycoplasma</taxon>
    </lineage>
</organism>
<evidence type="ECO:0000255" key="1">
    <source>
        <dbReference type="HAMAP-Rule" id="MF_00534"/>
    </source>
</evidence>
<proteinExistence type="inferred from homology"/>
<feature type="chain" id="PRO_1000051409" description="Asparagine--tRNA ligase">
    <location>
        <begin position="1"/>
        <end position="449"/>
    </location>
</feature>